<reference key="1">
    <citation type="journal article" date="2007" name="PLoS ONE">
        <title>Genome sequencing shows that European isolates of Francisella tularensis subspecies tularensis are almost identical to US laboratory strain Schu S4.</title>
        <authorList>
            <person name="Chaudhuri R.R."/>
            <person name="Ren C.-P."/>
            <person name="Desmond L."/>
            <person name="Vincent G.A."/>
            <person name="Silman N.J."/>
            <person name="Brehm J.K."/>
            <person name="Elmore M.J."/>
            <person name="Hudson M.J."/>
            <person name="Forsman M."/>
            <person name="Isherwood K.E."/>
            <person name="Gurycova D."/>
            <person name="Minton N.P."/>
            <person name="Titball R.W."/>
            <person name="Pallen M.J."/>
            <person name="Vipond R."/>
        </authorList>
    </citation>
    <scope>NUCLEOTIDE SEQUENCE [LARGE SCALE GENOMIC DNA]</scope>
    <source>
        <strain>FSC 198</strain>
    </source>
</reference>
<evidence type="ECO:0000255" key="1">
    <source>
        <dbReference type="HAMAP-Rule" id="MF_00151"/>
    </source>
</evidence>
<protein>
    <recommendedName>
        <fullName evidence="1">Phosphopantetheine adenylyltransferase</fullName>
        <ecNumber evidence="1">2.7.7.3</ecNumber>
    </recommendedName>
    <alternativeName>
        <fullName evidence="1">Dephospho-CoA pyrophosphorylase</fullName>
    </alternativeName>
    <alternativeName>
        <fullName evidence="1">Pantetheine-phosphate adenylyltransferase</fullName>
        <shortName evidence="1">PPAT</shortName>
    </alternativeName>
</protein>
<accession>Q14IN9</accession>
<proteinExistence type="inferred from homology"/>
<gene>
    <name evidence="1" type="primary">coaD</name>
    <name type="ordered locus">FTF0581</name>
</gene>
<feature type="chain" id="PRO_1000011144" description="Phosphopantetheine adenylyltransferase">
    <location>
        <begin position="1"/>
        <end position="162"/>
    </location>
</feature>
<feature type="binding site" evidence="1">
    <location>
        <begin position="10"/>
        <end position="11"/>
    </location>
    <ligand>
        <name>ATP</name>
        <dbReference type="ChEBI" id="CHEBI:30616"/>
    </ligand>
</feature>
<feature type="binding site" evidence="1">
    <location>
        <position position="10"/>
    </location>
    <ligand>
        <name>substrate</name>
    </ligand>
</feature>
<feature type="binding site" evidence="1">
    <location>
        <position position="18"/>
    </location>
    <ligand>
        <name>ATP</name>
        <dbReference type="ChEBI" id="CHEBI:30616"/>
    </ligand>
</feature>
<feature type="binding site" evidence="1">
    <location>
        <position position="42"/>
    </location>
    <ligand>
        <name>substrate</name>
    </ligand>
</feature>
<feature type="binding site" evidence="1">
    <location>
        <position position="74"/>
    </location>
    <ligand>
        <name>substrate</name>
    </ligand>
</feature>
<feature type="binding site" evidence="1">
    <location>
        <position position="88"/>
    </location>
    <ligand>
        <name>substrate</name>
    </ligand>
</feature>
<feature type="binding site" evidence="1">
    <location>
        <begin position="89"/>
        <end position="91"/>
    </location>
    <ligand>
        <name>ATP</name>
        <dbReference type="ChEBI" id="CHEBI:30616"/>
    </ligand>
</feature>
<feature type="binding site" evidence="1">
    <location>
        <position position="99"/>
    </location>
    <ligand>
        <name>ATP</name>
        <dbReference type="ChEBI" id="CHEBI:30616"/>
    </ligand>
</feature>
<feature type="binding site" evidence="1">
    <location>
        <begin position="124"/>
        <end position="130"/>
    </location>
    <ligand>
        <name>ATP</name>
        <dbReference type="ChEBI" id="CHEBI:30616"/>
    </ligand>
</feature>
<feature type="site" description="Transition state stabilizer" evidence="1">
    <location>
        <position position="18"/>
    </location>
</feature>
<name>COAD_FRAT1</name>
<sequence length="162" mass="18517">MNKIAIYPGTFDPITNGHVDLVERALNIFDEIVVAVSTAYGKNTLFDIRIREQMIKEVFKDNQRVKVVSFQGLLVDTAVKHNACAIVRGLRAVSDFDYEFQMSSMNNKLNSDIQTIFLTPSEKFSCISSTLVRAVAIHNYKRVDEFVPECVFREIKLKYSKE</sequence>
<dbReference type="EC" id="2.7.7.3" evidence="1"/>
<dbReference type="EMBL" id="AM286280">
    <property type="protein sequence ID" value="CAL08597.1"/>
    <property type="molecule type" value="Genomic_DNA"/>
</dbReference>
<dbReference type="RefSeq" id="WP_003016535.1">
    <property type="nucleotide sequence ID" value="NC_008245.1"/>
</dbReference>
<dbReference type="SMR" id="Q14IN9"/>
<dbReference type="KEGG" id="ftf:FTF0581"/>
<dbReference type="HOGENOM" id="CLU_100149_0_1_6"/>
<dbReference type="UniPathway" id="UPA00241">
    <property type="reaction ID" value="UER00355"/>
</dbReference>
<dbReference type="GO" id="GO:0005737">
    <property type="term" value="C:cytoplasm"/>
    <property type="evidence" value="ECO:0007669"/>
    <property type="project" value="UniProtKB-SubCell"/>
</dbReference>
<dbReference type="GO" id="GO:0005524">
    <property type="term" value="F:ATP binding"/>
    <property type="evidence" value="ECO:0007669"/>
    <property type="project" value="UniProtKB-KW"/>
</dbReference>
<dbReference type="GO" id="GO:0004595">
    <property type="term" value="F:pantetheine-phosphate adenylyltransferase activity"/>
    <property type="evidence" value="ECO:0007669"/>
    <property type="project" value="UniProtKB-UniRule"/>
</dbReference>
<dbReference type="GO" id="GO:0015937">
    <property type="term" value="P:coenzyme A biosynthetic process"/>
    <property type="evidence" value="ECO:0007669"/>
    <property type="project" value="UniProtKB-UniRule"/>
</dbReference>
<dbReference type="CDD" id="cd02163">
    <property type="entry name" value="PPAT"/>
    <property type="match status" value="1"/>
</dbReference>
<dbReference type="Gene3D" id="3.40.50.620">
    <property type="entry name" value="HUPs"/>
    <property type="match status" value="1"/>
</dbReference>
<dbReference type="HAMAP" id="MF_00151">
    <property type="entry name" value="PPAT_bact"/>
    <property type="match status" value="1"/>
</dbReference>
<dbReference type="InterPro" id="IPR004821">
    <property type="entry name" value="Cyt_trans-like"/>
</dbReference>
<dbReference type="InterPro" id="IPR001980">
    <property type="entry name" value="PPAT"/>
</dbReference>
<dbReference type="InterPro" id="IPR014729">
    <property type="entry name" value="Rossmann-like_a/b/a_fold"/>
</dbReference>
<dbReference type="NCBIfam" id="TIGR01510">
    <property type="entry name" value="coaD_prev_kdtB"/>
    <property type="match status" value="1"/>
</dbReference>
<dbReference type="NCBIfam" id="TIGR00125">
    <property type="entry name" value="cyt_tran_rel"/>
    <property type="match status" value="1"/>
</dbReference>
<dbReference type="PANTHER" id="PTHR21342">
    <property type="entry name" value="PHOSPHOPANTETHEINE ADENYLYLTRANSFERASE"/>
    <property type="match status" value="1"/>
</dbReference>
<dbReference type="PANTHER" id="PTHR21342:SF1">
    <property type="entry name" value="PHOSPHOPANTETHEINE ADENYLYLTRANSFERASE"/>
    <property type="match status" value="1"/>
</dbReference>
<dbReference type="Pfam" id="PF01467">
    <property type="entry name" value="CTP_transf_like"/>
    <property type="match status" value="1"/>
</dbReference>
<dbReference type="PRINTS" id="PR01020">
    <property type="entry name" value="LPSBIOSNTHSS"/>
</dbReference>
<dbReference type="SUPFAM" id="SSF52374">
    <property type="entry name" value="Nucleotidylyl transferase"/>
    <property type="match status" value="1"/>
</dbReference>
<keyword id="KW-0067">ATP-binding</keyword>
<keyword id="KW-0173">Coenzyme A biosynthesis</keyword>
<keyword id="KW-0963">Cytoplasm</keyword>
<keyword id="KW-0460">Magnesium</keyword>
<keyword id="KW-0547">Nucleotide-binding</keyword>
<keyword id="KW-0548">Nucleotidyltransferase</keyword>
<keyword id="KW-0808">Transferase</keyword>
<organism>
    <name type="scientific">Francisella tularensis subsp. tularensis (strain FSC 198)</name>
    <dbReference type="NCBI Taxonomy" id="393115"/>
    <lineage>
        <taxon>Bacteria</taxon>
        <taxon>Pseudomonadati</taxon>
        <taxon>Pseudomonadota</taxon>
        <taxon>Gammaproteobacteria</taxon>
        <taxon>Thiotrichales</taxon>
        <taxon>Francisellaceae</taxon>
        <taxon>Francisella</taxon>
    </lineage>
</organism>
<comment type="function">
    <text evidence="1">Reversibly transfers an adenylyl group from ATP to 4'-phosphopantetheine, yielding dephospho-CoA (dPCoA) and pyrophosphate.</text>
</comment>
<comment type="catalytic activity">
    <reaction evidence="1">
        <text>(R)-4'-phosphopantetheine + ATP + H(+) = 3'-dephospho-CoA + diphosphate</text>
        <dbReference type="Rhea" id="RHEA:19801"/>
        <dbReference type="ChEBI" id="CHEBI:15378"/>
        <dbReference type="ChEBI" id="CHEBI:30616"/>
        <dbReference type="ChEBI" id="CHEBI:33019"/>
        <dbReference type="ChEBI" id="CHEBI:57328"/>
        <dbReference type="ChEBI" id="CHEBI:61723"/>
        <dbReference type="EC" id="2.7.7.3"/>
    </reaction>
</comment>
<comment type="cofactor">
    <cofactor evidence="1">
        <name>Mg(2+)</name>
        <dbReference type="ChEBI" id="CHEBI:18420"/>
    </cofactor>
</comment>
<comment type="pathway">
    <text evidence="1">Cofactor biosynthesis; coenzyme A biosynthesis; CoA from (R)-pantothenate: step 4/5.</text>
</comment>
<comment type="subunit">
    <text evidence="1">Homohexamer.</text>
</comment>
<comment type="subcellular location">
    <subcellularLocation>
        <location evidence="1">Cytoplasm</location>
    </subcellularLocation>
</comment>
<comment type="similarity">
    <text evidence="1">Belongs to the bacterial CoaD family.</text>
</comment>